<evidence type="ECO:0000250" key="1"/>
<evidence type="ECO:0000250" key="2">
    <source>
        <dbReference type="UniProtKB" id="P83847"/>
    </source>
</evidence>
<evidence type="ECO:0000250" key="3">
    <source>
        <dbReference type="UniProtKB" id="Q99P21"/>
    </source>
</evidence>
<evidence type="ECO:0000250" key="4">
    <source>
        <dbReference type="UniProtKB" id="Q9UIF7"/>
    </source>
</evidence>
<evidence type="ECO:0000255" key="5">
    <source>
        <dbReference type="PROSITE-ProRule" id="PRU00794"/>
    </source>
</evidence>
<evidence type="ECO:0000256" key="6">
    <source>
        <dbReference type="SAM" id="MobiDB-lite"/>
    </source>
</evidence>
<evidence type="ECO:0000269" key="7">
    <source>
    </source>
</evidence>
<evidence type="ECO:0000305" key="8"/>
<gene>
    <name type="primary">Mutyh</name>
    <name type="synonym">Myh</name>
</gene>
<protein>
    <recommendedName>
        <fullName>Adenine DNA glycosylase</fullName>
        <ecNumber evidence="3">3.2.2.31</ecNumber>
    </recommendedName>
    <alternativeName>
        <fullName>MutY homolog</fullName>
        <shortName>rMYH</shortName>
    </alternativeName>
</protein>
<organism>
    <name type="scientific">Rattus norvegicus</name>
    <name type="common">Rat</name>
    <dbReference type="NCBI Taxonomy" id="10116"/>
    <lineage>
        <taxon>Eukaryota</taxon>
        <taxon>Metazoa</taxon>
        <taxon>Chordata</taxon>
        <taxon>Craniata</taxon>
        <taxon>Vertebrata</taxon>
        <taxon>Euteleostomi</taxon>
        <taxon>Mammalia</taxon>
        <taxon>Eutheria</taxon>
        <taxon>Euarchontoglires</taxon>
        <taxon>Glires</taxon>
        <taxon>Rodentia</taxon>
        <taxon>Myomorpha</taxon>
        <taxon>Muroidea</taxon>
        <taxon>Muridae</taxon>
        <taxon>Murinae</taxon>
        <taxon>Rattus</taxon>
    </lineage>
</organism>
<name>MUTYH_RAT</name>
<sequence length="516" mass="57919">MKKLRASVRSHKKQPANHKRRGKCALSSSQAKPSGLDGLAKQKREELLKTPVSPYHLFSDIADVTAFRRNLLSWYDQEKRDLPWRKRVKEETNLDRRAYAVWVSEVMLQQTQVATVIDYYTRWMQKWPTLQDLASASLEEVNQLWSGLGYYSRGRRLQEGARKVVEELGGHVPRTAETLQQLLPGVGRYTAGAIASIAFDQVTGVVDGNVIRVLCRVRAIGADPTSSFVSHHLWDLAQQLVDPARPGDFNQAAMELGATVCTPQRPLCNHCPVQSLCRAHQRVGQGRLSALPGSPDIEECALNTRQCQLCLPSTNPWDPNMGVVNFPRKASRRPPREEYSATCVVEQPGATGGPLILLVQRPNSGLLAGLWEFPSVTLEPSGQHQHKALLQELQHWSAPLPTTPLQHLGEVIHVFSHIKLTYQVYSLALEGQTPASTTLPGARWLTWEEFRNAAVSTAMKKVFRVYEEHRRGTCKGSKRPQVCTPSSRKKPSRGQQVLDRFFQRHIPTHKPNSTTQ</sequence>
<keyword id="KW-0004">4Fe-4S</keyword>
<keyword id="KW-0227">DNA damage</keyword>
<keyword id="KW-0234">DNA repair</keyword>
<keyword id="KW-0326">Glycosidase</keyword>
<keyword id="KW-0378">Hydrolase</keyword>
<keyword id="KW-0408">Iron</keyword>
<keyword id="KW-0411">Iron-sulfur</keyword>
<keyword id="KW-0479">Metal-binding</keyword>
<keyword id="KW-0496">Mitochondrion</keyword>
<keyword id="KW-0539">Nucleus</keyword>
<keyword id="KW-1185">Reference proteome</keyword>
<proteinExistence type="evidence at transcript level"/>
<dbReference type="EC" id="3.2.2.31" evidence="3"/>
<dbReference type="EMBL" id="AF478683">
    <property type="protein sequence ID" value="AAL79551.1"/>
    <property type="molecule type" value="mRNA"/>
</dbReference>
<dbReference type="RefSeq" id="NP_579850.1">
    <property type="nucleotide sequence ID" value="NM_133316.1"/>
</dbReference>
<dbReference type="SMR" id="Q8R5G2"/>
<dbReference type="FunCoup" id="Q8R5G2">
    <property type="interactions" value="592"/>
</dbReference>
<dbReference type="STRING" id="10116.ENSRNOP00000024375"/>
<dbReference type="PhosphoSitePlus" id="Q8R5G2"/>
<dbReference type="PaxDb" id="10116-ENSRNOP00000024375"/>
<dbReference type="GeneID" id="170841"/>
<dbReference type="KEGG" id="rno:170841"/>
<dbReference type="UCSC" id="RGD:620045">
    <property type="organism name" value="rat"/>
</dbReference>
<dbReference type="AGR" id="RGD:620045"/>
<dbReference type="CTD" id="4595"/>
<dbReference type="RGD" id="620045">
    <property type="gene designation" value="Mutyh"/>
</dbReference>
<dbReference type="eggNOG" id="KOG2457">
    <property type="taxonomic scope" value="Eukaryota"/>
</dbReference>
<dbReference type="InParanoid" id="Q8R5G2"/>
<dbReference type="PhylomeDB" id="Q8R5G2"/>
<dbReference type="BRENDA" id="3.2.2.31">
    <property type="organism ID" value="5301"/>
</dbReference>
<dbReference type="Reactome" id="R-RNO-110331">
    <property type="pathway name" value="Cleavage of the damaged purine"/>
</dbReference>
<dbReference type="Reactome" id="R-RNO-110357">
    <property type="pathway name" value="Displacement of DNA glycosylase by APEX1"/>
</dbReference>
<dbReference type="PRO" id="PR:Q8R5G2"/>
<dbReference type="Proteomes" id="UP000002494">
    <property type="component" value="Unplaced"/>
</dbReference>
<dbReference type="GO" id="GO:0005739">
    <property type="term" value="C:mitochondrion"/>
    <property type="evidence" value="ECO:0007669"/>
    <property type="project" value="UniProtKB-SubCell"/>
</dbReference>
<dbReference type="GO" id="GO:0005634">
    <property type="term" value="C:nucleus"/>
    <property type="evidence" value="ECO:0000318"/>
    <property type="project" value="GO_Central"/>
</dbReference>
<dbReference type="GO" id="GO:0051539">
    <property type="term" value="F:4 iron, 4 sulfur cluster binding"/>
    <property type="evidence" value="ECO:0007669"/>
    <property type="project" value="UniProtKB-KW"/>
</dbReference>
<dbReference type="GO" id="GO:0034039">
    <property type="term" value="F:8-oxo-7,8-dihydroguanine DNA N-glycosylase activity"/>
    <property type="evidence" value="ECO:0000318"/>
    <property type="project" value="GO_Central"/>
</dbReference>
<dbReference type="GO" id="GO:0035485">
    <property type="term" value="F:adenine/guanine mispair binding"/>
    <property type="evidence" value="ECO:0000318"/>
    <property type="project" value="GO_Central"/>
</dbReference>
<dbReference type="GO" id="GO:0019104">
    <property type="term" value="F:DNA N-glycosylase activity"/>
    <property type="evidence" value="ECO:0000314"/>
    <property type="project" value="RGD"/>
</dbReference>
<dbReference type="GO" id="GO:0046872">
    <property type="term" value="F:metal ion binding"/>
    <property type="evidence" value="ECO:0007669"/>
    <property type="project" value="UniProtKB-KW"/>
</dbReference>
<dbReference type="GO" id="GO:0032407">
    <property type="term" value="F:MutSalpha complex binding"/>
    <property type="evidence" value="ECO:0000266"/>
    <property type="project" value="RGD"/>
</dbReference>
<dbReference type="GO" id="GO:0032357">
    <property type="term" value="F:oxidized purine DNA binding"/>
    <property type="evidence" value="ECO:0000318"/>
    <property type="project" value="GO_Central"/>
</dbReference>
<dbReference type="GO" id="GO:0000701">
    <property type="term" value="F:purine-specific mismatch base pair DNA N-glycosylase activity"/>
    <property type="evidence" value="ECO:0000250"/>
    <property type="project" value="UniProtKB"/>
</dbReference>
<dbReference type="GO" id="GO:0006284">
    <property type="term" value="P:base-excision repair"/>
    <property type="evidence" value="ECO:0000318"/>
    <property type="project" value="GO_Central"/>
</dbReference>
<dbReference type="GO" id="GO:0006298">
    <property type="term" value="P:mismatch repair"/>
    <property type="evidence" value="ECO:0000318"/>
    <property type="project" value="GO_Central"/>
</dbReference>
<dbReference type="GO" id="GO:0060546">
    <property type="term" value="P:negative regulation of necroptotic process"/>
    <property type="evidence" value="ECO:0000266"/>
    <property type="project" value="RGD"/>
</dbReference>
<dbReference type="GO" id="GO:0006979">
    <property type="term" value="P:response to oxidative stress"/>
    <property type="evidence" value="ECO:0000314"/>
    <property type="project" value="RGD"/>
</dbReference>
<dbReference type="CDD" id="cd00056">
    <property type="entry name" value="ENDO3c"/>
    <property type="match status" value="1"/>
</dbReference>
<dbReference type="CDD" id="cd03431">
    <property type="entry name" value="NUDIX_DNA_Glycosylase_C-MutY"/>
    <property type="match status" value="1"/>
</dbReference>
<dbReference type="FunFam" id="1.10.1670.10:FF:000002">
    <property type="entry name" value="Adenine DNA glycosylase"/>
    <property type="match status" value="1"/>
</dbReference>
<dbReference type="FunFam" id="1.10.340.30:FF:000002">
    <property type="entry name" value="Adenine DNA glycosylase"/>
    <property type="match status" value="1"/>
</dbReference>
<dbReference type="FunFam" id="3.90.79.10:FF:000026">
    <property type="entry name" value="Adenine DNA glycosylase"/>
    <property type="match status" value="1"/>
</dbReference>
<dbReference type="Gene3D" id="1.10.1670.10">
    <property type="entry name" value="Helix-hairpin-Helix base-excision DNA repair enzymes (C-terminal)"/>
    <property type="match status" value="1"/>
</dbReference>
<dbReference type="Gene3D" id="1.10.340.30">
    <property type="entry name" value="Hypothetical protein, domain 2"/>
    <property type="match status" value="1"/>
</dbReference>
<dbReference type="Gene3D" id="3.90.79.10">
    <property type="entry name" value="Nucleoside Triphosphate Pyrophosphohydrolase"/>
    <property type="match status" value="1"/>
</dbReference>
<dbReference type="InterPro" id="IPR005760">
    <property type="entry name" value="A/G_AdeGlyc_MutY"/>
</dbReference>
<dbReference type="InterPro" id="IPR011257">
    <property type="entry name" value="DNA_glycosylase"/>
</dbReference>
<dbReference type="InterPro" id="IPR004036">
    <property type="entry name" value="Endonuclease-III-like_CS2"/>
</dbReference>
<dbReference type="InterPro" id="IPR003651">
    <property type="entry name" value="Endonuclease3_FeS-loop_motif"/>
</dbReference>
<dbReference type="InterPro" id="IPR004035">
    <property type="entry name" value="Endouclease-III_FeS-bd_BS"/>
</dbReference>
<dbReference type="InterPro" id="IPR003265">
    <property type="entry name" value="HhH-GPD_domain"/>
</dbReference>
<dbReference type="InterPro" id="IPR023170">
    <property type="entry name" value="HhH_base_excis_C"/>
</dbReference>
<dbReference type="InterPro" id="IPR000445">
    <property type="entry name" value="HhH_motif"/>
</dbReference>
<dbReference type="InterPro" id="IPR044298">
    <property type="entry name" value="MIG/MutY"/>
</dbReference>
<dbReference type="InterPro" id="IPR029119">
    <property type="entry name" value="MutY_C"/>
</dbReference>
<dbReference type="InterPro" id="IPR015797">
    <property type="entry name" value="NUDIX_hydrolase-like_dom_sf"/>
</dbReference>
<dbReference type="InterPro" id="IPR000086">
    <property type="entry name" value="NUDIX_hydrolase_dom"/>
</dbReference>
<dbReference type="NCBIfam" id="TIGR01084">
    <property type="entry name" value="mutY"/>
    <property type="match status" value="1"/>
</dbReference>
<dbReference type="PANTHER" id="PTHR42944">
    <property type="entry name" value="ADENINE DNA GLYCOSYLASE"/>
    <property type="match status" value="1"/>
</dbReference>
<dbReference type="PANTHER" id="PTHR42944:SF1">
    <property type="entry name" value="ADENINE DNA GLYCOSYLASE"/>
    <property type="match status" value="1"/>
</dbReference>
<dbReference type="Pfam" id="PF00633">
    <property type="entry name" value="HHH"/>
    <property type="match status" value="1"/>
</dbReference>
<dbReference type="Pfam" id="PF00730">
    <property type="entry name" value="HhH-GPD"/>
    <property type="match status" value="1"/>
</dbReference>
<dbReference type="Pfam" id="PF14815">
    <property type="entry name" value="NUDIX_4"/>
    <property type="match status" value="1"/>
</dbReference>
<dbReference type="SMART" id="SM00478">
    <property type="entry name" value="ENDO3c"/>
    <property type="match status" value="1"/>
</dbReference>
<dbReference type="SMART" id="SM00525">
    <property type="entry name" value="FES"/>
    <property type="match status" value="1"/>
</dbReference>
<dbReference type="SUPFAM" id="SSF48150">
    <property type="entry name" value="DNA-glycosylase"/>
    <property type="match status" value="1"/>
</dbReference>
<dbReference type="SUPFAM" id="SSF55811">
    <property type="entry name" value="Nudix"/>
    <property type="match status" value="1"/>
</dbReference>
<dbReference type="PROSITE" id="PS00764">
    <property type="entry name" value="ENDONUCLEASE_III_1"/>
    <property type="match status" value="1"/>
</dbReference>
<dbReference type="PROSITE" id="PS01155">
    <property type="entry name" value="ENDONUCLEASE_III_2"/>
    <property type="match status" value="1"/>
</dbReference>
<dbReference type="PROSITE" id="PS51462">
    <property type="entry name" value="NUDIX"/>
    <property type="match status" value="1"/>
</dbReference>
<accession>Q8R5G2</accession>
<reference key="1">
    <citation type="journal article" date="2002" name="J. Neurochem.">
        <title>Hypoxia induces mitochondrial DNA damage and stimulates expression of a DNA repair enzyme, the Escherichia coli MutY DNA glycosylase homolog (MYH), in vivo, in the rat brain.</title>
        <authorList>
            <person name="Lee H.-M."/>
            <person name="Wang C."/>
            <person name="Hu Z."/>
            <person name="Greeley G.H. Jr."/>
            <person name="Makalowski W."/>
            <person name="Hellmich H.L."/>
            <person name="Englander E.W."/>
        </authorList>
    </citation>
    <scope>NUCLEOTIDE SEQUENCE [MRNA]</scope>
    <scope>TISSUE SPECIFICITY</scope>
    <source>
        <strain>Sprague-Dawley</strain>
        <tissue>Cerebellum</tissue>
    </source>
</reference>
<feature type="chain" id="PRO_0000102241" description="Adenine DNA glycosylase">
    <location>
        <begin position="1"/>
        <end position="516"/>
    </location>
</feature>
<feature type="domain" description="Nudix hydrolase" evidence="5">
    <location>
        <begin position="335"/>
        <end position="467"/>
    </location>
</feature>
<feature type="region of interest" description="Disordered" evidence="6">
    <location>
        <begin position="1"/>
        <end position="38"/>
    </location>
</feature>
<feature type="region of interest" description="Disordered" evidence="6">
    <location>
        <begin position="474"/>
        <end position="516"/>
    </location>
</feature>
<feature type="short sequence motif" description="Nudix box">
    <location>
        <begin position="376"/>
        <end position="398"/>
    </location>
</feature>
<feature type="compositionally biased region" description="Basic residues" evidence="6">
    <location>
        <begin position="1"/>
        <end position="23"/>
    </location>
</feature>
<feature type="active site" description="Proton donor/acceptor" evidence="2">
    <location>
        <position position="105"/>
    </location>
</feature>
<feature type="binding site" evidence="1">
    <location>
        <position position="261"/>
    </location>
    <ligand>
        <name>[4Fe-4S] cluster</name>
        <dbReference type="ChEBI" id="CHEBI:49883"/>
    </ligand>
</feature>
<feature type="binding site" evidence="1">
    <location>
        <position position="268"/>
    </location>
    <ligand>
        <name>[4Fe-4S] cluster</name>
        <dbReference type="ChEBI" id="CHEBI:49883"/>
    </ligand>
</feature>
<feature type="binding site" evidence="1">
    <location>
        <position position="271"/>
    </location>
    <ligand>
        <name>[4Fe-4S] cluster</name>
        <dbReference type="ChEBI" id="CHEBI:49883"/>
    </ligand>
</feature>
<feature type="binding site" evidence="1">
    <location>
        <position position="277"/>
    </location>
    <ligand>
        <name>[4Fe-4S] cluster</name>
        <dbReference type="ChEBI" id="CHEBI:49883"/>
    </ligand>
</feature>
<feature type="site" description="Transition state stabilizer" evidence="2">
    <location>
        <position position="207"/>
    </location>
</feature>
<comment type="function">
    <text evidence="4">Involved in oxidative DNA damage repair. Initiates repair of A*oxoG to C*G by removing the inappropriately paired adenine base from the DNA backbone. Possesses both adenine and 2-OH-A DNA glycosylase activities.</text>
</comment>
<comment type="catalytic activity">
    <reaction evidence="4">
        <text>Hydrolyzes free adenine bases from 7,8-dihydro-8-oxoguanine:adenine mismatched double-stranded DNA, leaving an apurinic site.</text>
        <dbReference type="EC" id="3.2.2.31"/>
    </reaction>
</comment>
<comment type="cofactor">
    <cofactor evidence="1">
        <name>[4Fe-4S] cluster</name>
        <dbReference type="ChEBI" id="CHEBI:49883"/>
    </cofactor>
    <text evidence="1">Binds 1 [4Fe-4S] cluster. The cluster does not appear to play a role in catalysis, but is probably involved in the proper positioning of the enzyme along the DNA strand.</text>
</comment>
<comment type="subcellular location">
    <subcellularLocation>
        <location evidence="4">Nucleus</location>
    </subcellularLocation>
    <subcellularLocation>
        <location evidence="3">Mitochondrion</location>
    </subcellularLocation>
</comment>
<comment type="tissue specificity">
    <text evidence="7">Expressed in brain, spleen, heart, liver and kidney.</text>
</comment>
<comment type="similarity">
    <text evidence="8">Belongs to the Nth/MutY family.</text>
</comment>